<feature type="chain" id="PRO_0000294090" description="Cyclin-dependent kinase inhibitor 6">
    <location>
        <begin position="1"/>
        <end position="196"/>
    </location>
</feature>
<feature type="region of interest" description="Disordered" evidence="1">
    <location>
        <begin position="1"/>
        <end position="36"/>
    </location>
</feature>
<feature type="region of interest" description="Disordered" evidence="1">
    <location>
        <begin position="55"/>
        <end position="151"/>
    </location>
</feature>
<feature type="compositionally biased region" description="Low complexity" evidence="1">
    <location>
        <begin position="124"/>
        <end position="139"/>
    </location>
</feature>
<feature type="modified residue" description="Phosphothreonine; by KIN10" evidence="9">
    <location>
        <position position="152"/>
    </location>
</feature>
<feature type="splice variant" id="VSP_036333" description="In isoform 2." evidence="10">
    <location>
        <begin position="177"/>
        <end position="196"/>
    </location>
</feature>
<feature type="mutagenesis site" description="Abolishes its phosphorylation." evidence="9">
    <original>T</original>
    <variation>A</variation>
    <location>
        <position position="152"/>
    </location>
</feature>
<feature type="mutagenesis site" description="Abolishes its phosphorylation. Reduces its ability to interact with CYCD3-1." evidence="9">
    <original>T</original>
    <variation>D</variation>
    <location>
        <position position="152"/>
    </location>
</feature>
<feature type="sequence conflict" description="In Ref. 6; BAF01170." evidence="11" ref="6">
    <original>A</original>
    <variation>S</variation>
    <location>
        <position position="87"/>
    </location>
</feature>
<keyword id="KW-0025">Alternative splicing</keyword>
<keyword id="KW-0131">Cell cycle</keyword>
<keyword id="KW-0539">Nucleus</keyword>
<keyword id="KW-0597">Phosphoprotein</keyword>
<keyword id="KW-0649">Protein kinase inhibitor</keyword>
<keyword id="KW-1185">Reference proteome</keyword>
<keyword id="KW-0832">Ubl conjugation</keyword>
<comment type="function">
    <text evidence="3 4 5 7">Binds and inhibits CYCD2-1/CDKA-1 complex kinase activity. Regulates cell division which is crucial for plant growth, development and morphogenesis. May inhibit CDK kinases specifically involved in the G1/S phase transition.</text>
</comment>
<comment type="activity regulation">
    <text evidence="9">Down-regulated by KIN10 under a phosphorylation-dependent manner.</text>
</comment>
<comment type="subunit">
    <text evidence="2 3 7 9">Specifically interacts with CDKA-1, but not with CDKB1-1. Interacts with CYCD1-1, CYCD4-1 and RHF1A. Binds to FBL17. Interacts with KIN10 (PubMed:23617622). Interacts with CYCD3-1 (PubMed:23617622).</text>
</comment>
<comment type="interaction">
    <interactant intactId="EBI-1253171">
        <id>Q0WNX9</id>
    </interactant>
    <interactant intactId="EBI-371713">
        <id>P24100</id>
        <label>CDKA-1</label>
    </interactant>
    <organismsDiffer>false</organismsDiffer>
    <experiments>3</experiments>
</comment>
<comment type="interaction">
    <interactant intactId="EBI-1253171">
        <id>Q0WNX9</id>
    </interactant>
    <interactant intactId="EBI-2026732">
        <id>Q8W104</id>
        <label>FBL17</label>
    </interactant>
    <organismsDiffer>false</organismsDiffer>
    <experiments>3</experiments>
</comment>
<comment type="subcellular location">
    <subcellularLocation>
        <location evidence="6 8 9">Nucleus</location>
        <location evidence="6 8 9">Nucleoplasm</location>
    </subcellularLocation>
    <text>Homogeneously distributed. Present in microspores and accumulates strongly in vegetative cell nuclei immediately after asymmetric division and disappears later.</text>
</comment>
<comment type="alternative products">
    <event type="alternative splicing"/>
    <isoform>
        <id>Q0WNX9-1</id>
        <name>1</name>
        <sequence type="displayed"/>
    </isoform>
    <isoform>
        <id>Q0WNX9-2</id>
        <name>2</name>
        <sequence type="described" ref="VSP_036333"/>
    </isoform>
</comment>
<comment type="tissue specificity">
    <text evidence="2 3 8">Expressed in newly formed organs such as the shoot apex. Expressed in cotyledon, primary root and marginal region of the leaves as well as in developing pollen.</text>
</comment>
<comment type="developmental stage">
    <text evidence="7 8">Expressed in both ovules and anthers during meiosis and disappears before gametophytic mitosis. Present in uninucleate microspore and bicellular pollen, and, to a lower extent, in immature tricellular pollen and mature tricellular pollen.</text>
</comment>
<comment type="PTM">
    <text evidence="7 8">Ubiquitinated by RHF1A and SCF(FBL17). Ubiquitination leads to its subsequent degradation, thus controlling cell cycle progression.</text>
</comment>
<comment type="PTM">
    <text evidence="9">The phosphorylation at Thr-152 by KIN10 represses its activity.</text>
</comment>
<comment type="similarity">
    <text evidence="11">Belongs to the CDI family. ICK/KRP subfamily.</text>
</comment>
<evidence type="ECO:0000256" key="1">
    <source>
        <dbReference type="SAM" id="MobiDB-lite"/>
    </source>
</evidence>
<evidence type="ECO:0000269" key="2">
    <source>
    </source>
</evidence>
<evidence type="ECO:0000269" key="3">
    <source>
    </source>
</evidence>
<evidence type="ECO:0000269" key="4">
    <source>
    </source>
</evidence>
<evidence type="ECO:0000269" key="5">
    <source>
    </source>
</evidence>
<evidence type="ECO:0000269" key="6">
    <source>
    </source>
</evidence>
<evidence type="ECO:0000269" key="7">
    <source>
    </source>
</evidence>
<evidence type="ECO:0000269" key="8">
    <source>
    </source>
</evidence>
<evidence type="ECO:0000269" key="9">
    <source>
    </source>
</evidence>
<evidence type="ECO:0000303" key="10">
    <source>
    </source>
</evidence>
<evidence type="ECO:0000305" key="11"/>
<protein>
    <recommendedName>
        <fullName>Cyclin-dependent kinase inhibitor 6</fullName>
    </recommendedName>
    <alternativeName>
        <fullName>Cyclin-dependent kinase inhibitor p22ack1</fullName>
    </alternativeName>
    <alternativeName>
        <fullName>Inhibitor/interactor of CDK protein 4</fullName>
    </alternativeName>
    <alternativeName>
        <fullName>KIP-related protein 6</fullName>
    </alternativeName>
</protein>
<name>KRP6_ARATH</name>
<reference key="1">
    <citation type="journal article" date="2001" name="Plant Cell">
        <title>Functional analysis of cyclin-dependent kinase inhibitors of Arabidopsis.</title>
        <authorList>
            <person name="de Veylder L."/>
            <person name="Beeckman T."/>
            <person name="Beemster G.T.S."/>
            <person name="Krols L."/>
            <person name="Terras F."/>
            <person name="Landrieu I."/>
            <person name="van der Schueren E."/>
            <person name="Maes S."/>
            <person name="Naudts M."/>
            <person name="Inze D."/>
        </authorList>
    </citation>
    <scope>NUCLEOTIDE SEQUENCE [MRNA] (ISOFORM 1)</scope>
    <scope>TISSUE SPECIFICITY</scope>
    <scope>INTERACTION WITH CDKA-1 AND CYCD4-1</scope>
    <source>
        <strain>cv. Columbia</strain>
    </source>
</reference>
<reference key="2">
    <citation type="journal article" date="2004" name="Biochem. Biophys. Res. Commun.">
        <title>Cyclin D1 and p22ack1 play opposite roles in plant growth and development.</title>
        <authorList>
            <person name="Cho J.W."/>
            <person name="Park S.C."/>
            <person name="Shin E.A."/>
            <person name="Kim C.K."/>
            <person name="Han W."/>
            <person name="Sohn S.-I."/>
            <person name="Song P.S."/>
            <person name="Wang M.-H."/>
        </authorList>
    </citation>
    <scope>NUCLEOTIDE SEQUENCE [GENOMIC DNA / MRNA] (ISOFORM 1)</scope>
    <scope>FUNCTION</scope>
    <scope>TISSUE SPECIFICITY</scope>
    <scope>INTERACTION WITH CYCD1-1</scope>
</reference>
<reference key="3">
    <citation type="journal article" date="2000" name="DNA Res.">
        <title>Structural analysis of Arabidopsis thaliana chromosome 3. II. Sequence features of the 4,251,695 bp regions covered by 90 P1, TAC and BAC clones.</title>
        <authorList>
            <person name="Kaneko T."/>
            <person name="Katoh T."/>
            <person name="Sato S."/>
            <person name="Nakamura Y."/>
            <person name="Asamizu E."/>
            <person name="Tabata S."/>
        </authorList>
    </citation>
    <scope>NUCLEOTIDE SEQUENCE [LARGE SCALE GENOMIC DNA]</scope>
    <source>
        <strain>cv. Columbia</strain>
    </source>
</reference>
<reference key="4">
    <citation type="journal article" date="2017" name="Plant J.">
        <title>Araport11: a complete reannotation of the Arabidopsis thaliana reference genome.</title>
        <authorList>
            <person name="Cheng C.Y."/>
            <person name="Krishnakumar V."/>
            <person name="Chan A.P."/>
            <person name="Thibaud-Nissen F."/>
            <person name="Schobel S."/>
            <person name="Town C.D."/>
        </authorList>
    </citation>
    <scope>GENOME REANNOTATION</scope>
    <source>
        <strain>cv. Columbia</strain>
    </source>
</reference>
<reference key="5">
    <citation type="journal article" date="2004" name="Genome Res.">
        <title>Whole genome sequence comparisons and 'full-length' cDNA sequences: a combined approach to evaluate and improve Arabidopsis genome annotation.</title>
        <authorList>
            <person name="Castelli V."/>
            <person name="Aury J.-M."/>
            <person name="Jaillon O."/>
            <person name="Wincker P."/>
            <person name="Clepet C."/>
            <person name="Menard M."/>
            <person name="Cruaud C."/>
            <person name="Quetier F."/>
            <person name="Scarpelli C."/>
            <person name="Schaechter V."/>
            <person name="Temple G."/>
            <person name="Caboche M."/>
            <person name="Weissenbach J."/>
            <person name="Salanoubat M."/>
        </authorList>
    </citation>
    <scope>NUCLEOTIDE SEQUENCE [LARGE SCALE MRNA] (ISOFORM 2)</scope>
    <source>
        <strain>cv. Columbia</strain>
    </source>
</reference>
<reference key="6">
    <citation type="submission" date="2006-07" db="EMBL/GenBank/DDBJ databases">
        <title>Large-scale analysis of RIKEN Arabidopsis full-length (RAFL) cDNAs.</title>
        <authorList>
            <person name="Totoki Y."/>
            <person name="Seki M."/>
            <person name="Ishida J."/>
            <person name="Nakajima M."/>
            <person name="Enju A."/>
            <person name="Kamiya A."/>
            <person name="Narusaka M."/>
            <person name="Shin-i T."/>
            <person name="Nakagawa M."/>
            <person name="Sakamoto N."/>
            <person name="Oishi K."/>
            <person name="Kohara Y."/>
            <person name="Kobayashi M."/>
            <person name="Toyoda A."/>
            <person name="Sakaki Y."/>
            <person name="Sakurai T."/>
            <person name="Iida K."/>
            <person name="Akiyama K."/>
            <person name="Satou M."/>
            <person name="Toyoda T."/>
            <person name="Konagaya A."/>
            <person name="Carninci P."/>
            <person name="Kawai J."/>
            <person name="Hayashizaki Y."/>
            <person name="Shinozaki K."/>
        </authorList>
    </citation>
    <scope>NUCLEOTIDE SEQUENCE [LARGE SCALE MRNA] (ISOFORM 1)</scope>
    <source>
        <strain>cv. Columbia</strain>
    </source>
</reference>
<reference key="7">
    <citation type="journal article" date="2005" name="Biochem. Biophys. Res. Commun.">
        <title>Overexpression of Arabidopsis ACK1 alters leaf morphology and retards growth and development.</title>
        <authorList>
            <person name="Han W."/>
            <person name="Rhee H."/>
            <person name="Cho J.W."/>
            <person name="Ku M.S.B."/>
            <person name="Song P.S."/>
            <person name="Wang M.-H."/>
        </authorList>
    </citation>
    <scope>FUNCTION</scope>
</reference>
<reference key="8">
    <citation type="journal article" date="2006" name="FEBS Lett.">
        <title>Arabidopsis KRPs have distinct inhibitory activity toward cyclin D2-associated kinases, including plant-specific B-type cyclin-dependent kinase.</title>
        <authorList>
            <person name="Nakai T."/>
            <person name="Kato K."/>
            <person name="Shinmyo A."/>
            <person name="Sekine M."/>
        </authorList>
    </citation>
    <scope>FUNCTION</scope>
</reference>
<reference key="9">
    <citation type="journal article" date="2007" name="Plant Cell Rep.">
        <title>Arabidopsis cyclin-dependent kinase inhibitors are nuclear-localized and show different localization patterns within the nucleoplasm.</title>
        <authorList>
            <person name="Bird D.A."/>
            <person name="Buruiana M.M."/>
            <person name="Zhou Y."/>
            <person name="Fowke L.C."/>
            <person name="Wang H."/>
        </authorList>
    </citation>
    <scope>SUBCELLULAR LOCATION</scope>
</reference>
<reference key="10">
    <citation type="journal article" date="2008" name="Nature">
        <title>Control of plant germline proliferation by SCF(FBL17) degradation of cell cycle inhibitors.</title>
        <authorList>
            <person name="Kim H.J."/>
            <person name="Oh S.A."/>
            <person name="Brownfield L."/>
            <person name="Hong S.H."/>
            <person name="Ryu H."/>
            <person name="Hwang I."/>
            <person name="Twell D."/>
            <person name="Nam H.G."/>
        </authorList>
    </citation>
    <scope>UBIQUITINATION</scope>
    <scope>TISSUE SPECIFICITY</scope>
    <scope>DEVELOPMENTAL STAGE</scope>
    <scope>SUBCELLULAR LOCATION</scope>
</reference>
<reference key="11">
    <citation type="journal article" date="2008" name="Plant Cell">
        <title>Targeted degradation of the cyclin-dependent kinase inhibitor ICK4/KRP6 by RING-type E3 ligases is essential for mitotic cell cycle progression during Arabidopsis gametogenesis.</title>
        <authorList>
            <person name="Liu J."/>
            <person name="Zhang Y."/>
            <person name="Qin G."/>
            <person name="Tsuge T."/>
            <person name="Sakaguchi N."/>
            <person name="Luo G."/>
            <person name="Sun K."/>
            <person name="Shi D."/>
            <person name="Aki S."/>
            <person name="Zheng N."/>
            <person name="Aoyama T."/>
            <person name="Oka A."/>
            <person name="Yang W."/>
            <person name="Umeda M."/>
            <person name="Xie Q."/>
            <person name="Gu H."/>
            <person name="Qu L.J."/>
        </authorList>
    </citation>
    <scope>FUNCTION</scope>
    <scope>INTERACTION WITH RHF1A</scope>
    <scope>DEVELOPMENTAL STAGE</scope>
    <scope>UBIQUITINATION</scope>
</reference>
<reference key="12">
    <citation type="journal article" date="2013" name="Plant J.">
        <title>Phosphorylation of p27(KIP1) homologs KRP6 and 7 by SNF1-related protein kinase-1 links plant energy homeostasis and cell proliferation.</title>
        <authorList>
            <person name="Guerinier T."/>
            <person name="Millan L."/>
            <person name="Crozet P."/>
            <person name="Oury C."/>
            <person name="Rey F."/>
            <person name="Valot B."/>
            <person name="Mathieu C."/>
            <person name="Vidal J."/>
            <person name="Hodges M."/>
            <person name="Thomas M."/>
            <person name="Glab N."/>
        </authorList>
    </citation>
    <scope>PHOSPHORYLATION AT THR-152</scope>
    <scope>IDENTIFICATION BY MASS SPECTROMETRY</scope>
    <scope>MUTAGENESIS OF THR-152</scope>
    <scope>ACTIVITY REGULATION</scope>
    <scope>SUBCELLULAR LOCATION</scope>
    <scope>INTERACTION WITH KIN10 AND CYCD3-1</scope>
</reference>
<organism>
    <name type="scientific">Arabidopsis thaliana</name>
    <name type="common">Mouse-ear cress</name>
    <dbReference type="NCBI Taxonomy" id="3702"/>
    <lineage>
        <taxon>Eukaryota</taxon>
        <taxon>Viridiplantae</taxon>
        <taxon>Streptophyta</taxon>
        <taxon>Embryophyta</taxon>
        <taxon>Tracheophyta</taxon>
        <taxon>Spermatophyta</taxon>
        <taxon>Magnoliopsida</taxon>
        <taxon>eudicotyledons</taxon>
        <taxon>Gunneridae</taxon>
        <taxon>Pentapetalae</taxon>
        <taxon>rosids</taxon>
        <taxon>malvids</taxon>
        <taxon>Brassicales</taxon>
        <taxon>Brassicaceae</taxon>
        <taxon>Camelineae</taxon>
        <taxon>Arabidopsis</taxon>
    </lineage>
</organism>
<sequence length="196" mass="21454">MSERKRELAEEASSTSFSPLKKTKLNDSSDSSPDSHDVIVFAVSSSSVASSAALASDECSVTIGGEESDQSSSISSGCFTSESKEIAKNSSSFGVDLEDHQIETETETSTFITSNFRKETSPVSEGLGETTTEMESSSATKRKQPGVRKTPTAAEIEDLFSELESQDDKKKQFIEKYNFDIVNDEPLEGRYKWDRL</sequence>
<proteinExistence type="evidence at protein level"/>
<dbReference type="EMBL" id="AJ301557">
    <property type="protein sequence ID" value="CAC41620.1"/>
    <property type="molecule type" value="mRNA"/>
</dbReference>
<dbReference type="EMBL" id="AF106705">
    <property type="protein sequence ID" value="AAF77612.2"/>
    <property type="molecule type" value="mRNA"/>
</dbReference>
<dbReference type="EMBL" id="AF208692">
    <property type="protein sequence ID" value="AAL35985.1"/>
    <property type="molecule type" value="Genomic_DNA"/>
</dbReference>
<dbReference type="EMBL" id="AP000419">
    <property type="protein sequence ID" value="BAB02955.1"/>
    <property type="molecule type" value="Genomic_DNA"/>
</dbReference>
<dbReference type="EMBL" id="CP002686">
    <property type="protein sequence ID" value="AEE76198.1"/>
    <property type="molecule type" value="Genomic_DNA"/>
</dbReference>
<dbReference type="EMBL" id="CP002686">
    <property type="protein sequence ID" value="AEE76199.1"/>
    <property type="molecule type" value="Genomic_DNA"/>
</dbReference>
<dbReference type="EMBL" id="BX826140">
    <property type="status" value="NOT_ANNOTATED_CDS"/>
    <property type="molecule type" value="mRNA"/>
</dbReference>
<dbReference type="EMBL" id="AK229307">
    <property type="protein sequence ID" value="BAF01170.1"/>
    <property type="molecule type" value="mRNA"/>
</dbReference>
<dbReference type="RefSeq" id="NP_188546.1">
    <molecule id="Q0WNX9-1"/>
    <property type="nucleotide sequence ID" value="NM_112802.4"/>
</dbReference>
<dbReference type="RefSeq" id="NP_974338.1">
    <molecule id="Q0WNX9-2"/>
    <property type="nucleotide sequence ID" value="NM_202609.3"/>
</dbReference>
<dbReference type="BioGRID" id="6782">
    <property type="interactions" value="25"/>
</dbReference>
<dbReference type="DIP" id="DIP-38668N"/>
<dbReference type="FunCoup" id="Q0WNX9">
    <property type="interactions" value="229"/>
</dbReference>
<dbReference type="IntAct" id="Q0WNX9">
    <property type="interactions" value="9"/>
</dbReference>
<dbReference type="STRING" id="3702.Q0WNX9"/>
<dbReference type="iPTMnet" id="Q0WNX9"/>
<dbReference type="PaxDb" id="3702-AT3G19150.1"/>
<dbReference type="ProteomicsDB" id="250766">
    <molecule id="Q0WNX9-1"/>
</dbReference>
<dbReference type="EnsemblPlants" id="AT3G19150.1">
    <molecule id="Q0WNX9-1"/>
    <property type="protein sequence ID" value="AT3G19150.1"/>
    <property type="gene ID" value="AT3G19150"/>
</dbReference>
<dbReference type="EnsemblPlants" id="AT3G19150.2">
    <molecule id="Q0WNX9-2"/>
    <property type="protein sequence ID" value="AT3G19150.2"/>
    <property type="gene ID" value="AT3G19150"/>
</dbReference>
<dbReference type="GeneID" id="821449"/>
<dbReference type="Gramene" id="AT3G19150.1">
    <molecule id="Q0WNX9-1"/>
    <property type="protein sequence ID" value="AT3G19150.1"/>
    <property type="gene ID" value="AT3G19150"/>
</dbReference>
<dbReference type="Gramene" id="AT3G19150.2">
    <molecule id="Q0WNX9-2"/>
    <property type="protein sequence ID" value="AT3G19150.2"/>
    <property type="gene ID" value="AT3G19150"/>
</dbReference>
<dbReference type="KEGG" id="ath:AT3G19150"/>
<dbReference type="Araport" id="AT3G19150"/>
<dbReference type="TAIR" id="AT3G19150">
    <property type="gene designation" value="KRP6"/>
</dbReference>
<dbReference type="HOGENOM" id="CLU_083146_2_0_1"/>
<dbReference type="InParanoid" id="Q0WNX9"/>
<dbReference type="OMA" id="STQGRCS"/>
<dbReference type="PhylomeDB" id="Q0WNX9"/>
<dbReference type="PRO" id="PR:Q0WNX9"/>
<dbReference type="Proteomes" id="UP000006548">
    <property type="component" value="Chromosome 3"/>
</dbReference>
<dbReference type="ExpressionAtlas" id="Q0WNX9">
    <property type="expression patterns" value="baseline and differential"/>
</dbReference>
<dbReference type="GO" id="GO:0001673">
    <property type="term" value="C:male germ cell nucleus"/>
    <property type="evidence" value="ECO:0000314"/>
    <property type="project" value="UniProtKB"/>
</dbReference>
<dbReference type="GO" id="GO:0005654">
    <property type="term" value="C:nucleoplasm"/>
    <property type="evidence" value="ECO:0000314"/>
    <property type="project" value="UniProtKB"/>
</dbReference>
<dbReference type="GO" id="GO:0004861">
    <property type="term" value="F:cyclin-dependent protein serine/threonine kinase inhibitor activity"/>
    <property type="evidence" value="ECO:0007669"/>
    <property type="project" value="InterPro"/>
</dbReference>
<dbReference type="GO" id="GO:0019900">
    <property type="term" value="F:kinase binding"/>
    <property type="evidence" value="ECO:0000353"/>
    <property type="project" value="UniProtKB"/>
</dbReference>
<dbReference type="GO" id="GO:0045736">
    <property type="term" value="P:negative regulation of cyclin-dependent protein serine/threonine kinase activity"/>
    <property type="evidence" value="ECO:0000314"/>
    <property type="project" value="TAIR"/>
</dbReference>
<dbReference type="Gene3D" id="4.10.365.10">
    <property type="entry name" value="p27"/>
    <property type="match status" value="1"/>
</dbReference>
<dbReference type="InterPro" id="IPR003175">
    <property type="entry name" value="CDI_dom"/>
</dbReference>
<dbReference type="InterPro" id="IPR044898">
    <property type="entry name" value="CDI_dom_sf"/>
</dbReference>
<dbReference type="InterPro" id="IPR044275">
    <property type="entry name" value="KRP"/>
</dbReference>
<dbReference type="PANTHER" id="PTHR46776">
    <property type="entry name" value="CYCLIN-DEPENDENT KINASE INHIBITOR 4-RELATED"/>
    <property type="match status" value="1"/>
</dbReference>
<dbReference type="Pfam" id="PF02234">
    <property type="entry name" value="CDI"/>
    <property type="match status" value="1"/>
</dbReference>
<dbReference type="PIRSF" id="PIRSF017811">
    <property type="entry name" value="CDK_inhib_pln"/>
    <property type="match status" value="1"/>
</dbReference>
<accession>Q0WNX9</accession>
<accession>A8MRW2</accession>
<accession>Q8W2K3</accession>
<accession>Q9LJL5</accession>
<gene>
    <name type="primary">KRP6</name>
    <name type="synonym">ACK1</name>
    <name type="synonym">ICK4</name>
    <name type="ordered locus">At3g19150</name>
    <name type="ORF">MVI11.5</name>
</gene>